<dbReference type="EC" id="2.1.-.-" evidence="1"/>
<dbReference type="EMBL" id="CP000948">
    <property type="protein sequence ID" value="ACB02241.1"/>
    <property type="molecule type" value="Genomic_DNA"/>
</dbReference>
<dbReference type="RefSeq" id="WP_001070375.1">
    <property type="nucleotide sequence ID" value="NC_010473.1"/>
</dbReference>
<dbReference type="GeneID" id="75203635"/>
<dbReference type="KEGG" id="ecd:ECDH10B_1119"/>
<dbReference type="HOGENOM" id="CLU_036182_2_0_6"/>
<dbReference type="UniPathway" id="UPA00637"/>
<dbReference type="GO" id="GO:0005886">
    <property type="term" value="C:plasma membrane"/>
    <property type="evidence" value="ECO:0007669"/>
    <property type="project" value="UniProtKB-SubCell"/>
</dbReference>
<dbReference type="GO" id="GO:0016747">
    <property type="term" value="F:acyltransferase activity, transferring groups other than amino-acyl groups"/>
    <property type="evidence" value="ECO:0007669"/>
    <property type="project" value="InterPro"/>
</dbReference>
<dbReference type="GO" id="GO:0016741">
    <property type="term" value="F:transferase activity, transferring one-carbon groups"/>
    <property type="evidence" value="ECO:0007669"/>
    <property type="project" value="UniProtKB-UniRule"/>
</dbReference>
<dbReference type="GO" id="GO:0009250">
    <property type="term" value="P:glucan biosynthetic process"/>
    <property type="evidence" value="ECO:0007669"/>
    <property type="project" value="UniProtKB-UniRule"/>
</dbReference>
<dbReference type="HAMAP" id="MF_01066">
    <property type="entry name" value="MdoC_OpgC"/>
    <property type="match status" value="1"/>
</dbReference>
<dbReference type="InterPro" id="IPR002656">
    <property type="entry name" value="Acyl_transf_3_dom"/>
</dbReference>
<dbReference type="InterPro" id="IPR050623">
    <property type="entry name" value="Glucan_succinyl_AcylTrfase"/>
</dbReference>
<dbReference type="InterPro" id="IPR023723">
    <property type="entry name" value="Glucans_biosynth_C"/>
</dbReference>
<dbReference type="NCBIfam" id="NF003014">
    <property type="entry name" value="PRK03854.1"/>
    <property type="match status" value="1"/>
</dbReference>
<dbReference type="PANTHER" id="PTHR36927">
    <property type="entry name" value="BLR4337 PROTEIN"/>
    <property type="match status" value="1"/>
</dbReference>
<dbReference type="PANTHER" id="PTHR36927:SF3">
    <property type="entry name" value="GLUCANS BIOSYNTHESIS PROTEIN C"/>
    <property type="match status" value="1"/>
</dbReference>
<dbReference type="Pfam" id="PF01757">
    <property type="entry name" value="Acyl_transf_3"/>
    <property type="match status" value="1"/>
</dbReference>
<evidence type="ECO:0000255" key="1">
    <source>
        <dbReference type="HAMAP-Rule" id="MF_01066"/>
    </source>
</evidence>
<organism>
    <name type="scientific">Escherichia coli (strain K12 / DH10B)</name>
    <dbReference type="NCBI Taxonomy" id="316385"/>
    <lineage>
        <taxon>Bacteria</taxon>
        <taxon>Pseudomonadati</taxon>
        <taxon>Pseudomonadota</taxon>
        <taxon>Gammaproteobacteria</taxon>
        <taxon>Enterobacterales</taxon>
        <taxon>Enterobacteriaceae</taxon>
        <taxon>Escherichia</taxon>
    </lineage>
</organism>
<gene>
    <name evidence="1" type="primary">mdoC</name>
    <name evidence="1" type="synonym">opgC</name>
    <name type="ordered locus">ECDH10B_1119</name>
</gene>
<proteinExistence type="inferred from homology"/>
<comment type="function">
    <text evidence="1">Necessary for the succinyl substitution of periplasmic glucans. Could catalyze the transfer of succinyl residues from the cytoplasmic side of the membrane to the nascent glucan backbones on the periplasmic side of the membrane.</text>
</comment>
<comment type="pathway">
    <text evidence="1">Glycan metabolism; osmoregulated periplasmic glucan (OPG) biosynthesis.</text>
</comment>
<comment type="subcellular location">
    <subcellularLocation>
        <location evidence="1">Cell membrane</location>
        <topology evidence="1">Multi-pass membrane protein</topology>
    </subcellularLocation>
</comment>
<comment type="similarity">
    <text evidence="1">Belongs to the acyltransferase 3 family. OpgC subfamily.</text>
</comment>
<name>OPGC_ECODH</name>
<reference key="1">
    <citation type="journal article" date="2008" name="J. Bacteriol.">
        <title>The complete genome sequence of Escherichia coli DH10B: insights into the biology of a laboratory workhorse.</title>
        <authorList>
            <person name="Durfee T."/>
            <person name="Nelson R."/>
            <person name="Baldwin S."/>
            <person name="Plunkett G. III"/>
            <person name="Burland V."/>
            <person name="Mau B."/>
            <person name="Petrosino J.F."/>
            <person name="Qin X."/>
            <person name="Muzny D.M."/>
            <person name="Ayele M."/>
            <person name="Gibbs R.A."/>
            <person name="Csorgo B."/>
            <person name="Posfai G."/>
            <person name="Weinstock G.M."/>
            <person name="Blattner F.R."/>
        </authorList>
    </citation>
    <scope>NUCLEOTIDE SEQUENCE [LARGE SCALE GENOMIC DNA]</scope>
    <source>
        <strain>K12 / DH10B</strain>
    </source>
</reference>
<protein>
    <recommendedName>
        <fullName evidence="1">Glucans biosynthesis protein C</fullName>
        <ecNumber evidence="1">2.1.-.-</ecNumber>
    </recommendedName>
</protein>
<sequence>MNPVPAQREYFLDSIRAWLMLLGIPFHISLIYSSHTWHVNSAESSLWLTLFNDFIHSFRMQVFFVISGYFSYMLFLRYPLKKWWKVRVERVGIPMLTAIPLLTLPQFIMLQYVKGKAESWPGLSLYDKYNTLAWELISHLWFLLVLVVMTTLCVWIFKRIRNNLENSDKTNKKFSMVKLSVIFLCLGIGYAVIRRTIFIVYPPILSNGMFNFIVMQTLFYLPFFILGALAFIFPHLKALFTTPSRGCTLAAALAFVAYLLNQRYGSGDAWMYETESVITMVLGLWMVNVVFSFGHRLLNFQSARVTYFVNASLFIYLVHHPLTLFFGAYITPHITSNWLGFLCGLIFVVGIAIILYEIHLRIPLLKFLFSGKPVVKRENDKAPAR</sequence>
<accession>B1X9G1</accession>
<keyword id="KW-0012">Acyltransferase</keyword>
<keyword id="KW-1003">Cell membrane</keyword>
<keyword id="KW-0472">Membrane</keyword>
<keyword id="KW-0808">Transferase</keyword>
<keyword id="KW-0812">Transmembrane</keyword>
<keyword id="KW-1133">Transmembrane helix</keyword>
<feature type="chain" id="PRO_1000136566" description="Glucans biosynthesis protein C">
    <location>
        <begin position="1"/>
        <end position="385"/>
    </location>
</feature>
<feature type="transmembrane region" description="Helical" evidence="1">
    <location>
        <begin position="17"/>
        <end position="37"/>
    </location>
</feature>
<feature type="transmembrane region" description="Helical" evidence="1">
    <location>
        <begin position="60"/>
        <end position="80"/>
    </location>
</feature>
<feature type="transmembrane region" description="Helical" evidence="1">
    <location>
        <begin position="91"/>
        <end position="111"/>
    </location>
</feature>
<feature type="transmembrane region" description="Helical" evidence="1">
    <location>
        <begin position="137"/>
        <end position="157"/>
    </location>
</feature>
<feature type="transmembrane region" description="Helical" evidence="1">
    <location>
        <begin position="173"/>
        <end position="193"/>
    </location>
</feature>
<feature type="transmembrane region" description="Helical" evidence="1">
    <location>
        <begin position="212"/>
        <end position="232"/>
    </location>
</feature>
<feature type="transmembrane region" description="Helical" evidence="1">
    <location>
        <begin position="239"/>
        <end position="259"/>
    </location>
</feature>
<feature type="transmembrane region" description="Helical" evidence="1">
    <location>
        <begin position="274"/>
        <end position="294"/>
    </location>
</feature>
<feature type="transmembrane region" description="Helical" evidence="1">
    <location>
        <begin position="311"/>
        <end position="331"/>
    </location>
</feature>
<feature type="transmembrane region" description="Helical" evidence="1">
    <location>
        <begin position="338"/>
        <end position="358"/>
    </location>
</feature>